<reference key="1">
    <citation type="journal article" date="2001" name="Cell Biol. Int.">
        <title>Cloning, sequencing and expression of a cDNA encoding the mouse L35a ribosomal protein during differentiation of murine erythroleukemia (MEL) cells.</title>
        <authorList>
            <person name="Pappas I.S."/>
            <person name="Vizirianakis I.S."/>
            <person name="Tsiftsoglou A.S."/>
        </authorList>
    </citation>
    <scope>NUCLEOTIDE SEQUENCE [MRNA]</scope>
    <source>
        <strain>DBA/2J</strain>
        <tissue>Erythroid cell</tissue>
    </source>
</reference>
<reference key="2">
    <citation type="submission" date="2001-07" db="EMBL/GenBank/DDBJ databases">
        <authorList>
            <person name="Vizirianakis I.S."/>
        </authorList>
    </citation>
    <scope>SEQUENCE REVISION TO 53</scope>
</reference>
<reference key="3">
    <citation type="journal article" date="2005" name="Science">
        <title>The transcriptional landscape of the mammalian genome.</title>
        <authorList>
            <person name="Carninci P."/>
            <person name="Kasukawa T."/>
            <person name="Katayama S."/>
            <person name="Gough J."/>
            <person name="Frith M.C."/>
            <person name="Maeda N."/>
            <person name="Oyama R."/>
            <person name="Ravasi T."/>
            <person name="Lenhard B."/>
            <person name="Wells C."/>
            <person name="Kodzius R."/>
            <person name="Shimokawa K."/>
            <person name="Bajic V.B."/>
            <person name="Brenner S.E."/>
            <person name="Batalov S."/>
            <person name="Forrest A.R."/>
            <person name="Zavolan M."/>
            <person name="Davis M.J."/>
            <person name="Wilming L.G."/>
            <person name="Aidinis V."/>
            <person name="Allen J.E."/>
            <person name="Ambesi-Impiombato A."/>
            <person name="Apweiler R."/>
            <person name="Aturaliya R.N."/>
            <person name="Bailey T.L."/>
            <person name="Bansal M."/>
            <person name="Baxter L."/>
            <person name="Beisel K.W."/>
            <person name="Bersano T."/>
            <person name="Bono H."/>
            <person name="Chalk A.M."/>
            <person name="Chiu K.P."/>
            <person name="Choudhary V."/>
            <person name="Christoffels A."/>
            <person name="Clutterbuck D.R."/>
            <person name="Crowe M.L."/>
            <person name="Dalla E."/>
            <person name="Dalrymple B.P."/>
            <person name="de Bono B."/>
            <person name="Della Gatta G."/>
            <person name="di Bernardo D."/>
            <person name="Down T."/>
            <person name="Engstrom P."/>
            <person name="Fagiolini M."/>
            <person name="Faulkner G."/>
            <person name="Fletcher C.F."/>
            <person name="Fukushima T."/>
            <person name="Furuno M."/>
            <person name="Futaki S."/>
            <person name="Gariboldi M."/>
            <person name="Georgii-Hemming P."/>
            <person name="Gingeras T.R."/>
            <person name="Gojobori T."/>
            <person name="Green R.E."/>
            <person name="Gustincich S."/>
            <person name="Harbers M."/>
            <person name="Hayashi Y."/>
            <person name="Hensch T.K."/>
            <person name="Hirokawa N."/>
            <person name="Hill D."/>
            <person name="Huminiecki L."/>
            <person name="Iacono M."/>
            <person name="Ikeo K."/>
            <person name="Iwama A."/>
            <person name="Ishikawa T."/>
            <person name="Jakt M."/>
            <person name="Kanapin A."/>
            <person name="Katoh M."/>
            <person name="Kawasawa Y."/>
            <person name="Kelso J."/>
            <person name="Kitamura H."/>
            <person name="Kitano H."/>
            <person name="Kollias G."/>
            <person name="Krishnan S.P."/>
            <person name="Kruger A."/>
            <person name="Kummerfeld S.K."/>
            <person name="Kurochkin I.V."/>
            <person name="Lareau L.F."/>
            <person name="Lazarevic D."/>
            <person name="Lipovich L."/>
            <person name="Liu J."/>
            <person name="Liuni S."/>
            <person name="McWilliam S."/>
            <person name="Madan Babu M."/>
            <person name="Madera M."/>
            <person name="Marchionni L."/>
            <person name="Matsuda H."/>
            <person name="Matsuzawa S."/>
            <person name="Miki H."/>
            <person name="Mignone F."/>
            <person name="Miyake S."/>
            <person name="Morris K."/>
            <person name="Mottagui-Tabar S."/>
            <person name="Mulder N."/>
            <person name="Nakano N."/>
            <person name="Nakauchi H."/>
            <person name="Ng P."/>
            <person name="Nilsson R."/>
            <person name="Nishiguchi S."/>
            <person name="Nishikawa S."/>
            <person name="Nori F."/>
            <person name="Ohara O."/>
            <person name="Okazaki Y."/>
            <person name="Orlando V."/>
            <person name="Pang K.C."/>
            <person name="Pavan W.J."/>
            <person name="Pavesi G."/>
            <person name="Pesole G."/>
            <person name="Petrovsky N."/>
            <person name="Piazza S."/>
            <person name="Reed J."/>
            <person name="Reid J.F."/>
            <person name="Ring B.Z."/>
            <person name="Ringwald M."/>
            <person name="Rost B."/>
            <person name="Ruan Y."/>
            <person name="Salzberg S.L."/>
            <person name="Sandelin A."/>
            <person name="Schneider C."/>
            <person name="Schoenbach C."/>
            <person name="Sekiguchi K."/>
            <person name="Semple C.A."/>
            <person name="Seno S."/>
            <person name="Sessa L."/>
            <person name="Sheng Y."/>
            <person name="Shibata Y."/>
            <person name="Shimada H."/>
            <person name="Shimada K."/>
            <person name="Silva D."/>
            <person name="Sinclair B."/>
            <person name="Sperling S."/>
            <person name="Stupka E."/>
            <person name="Sugiura K."/>
            <person name="Sultana R."/>
            <person name="Takenaka Y."/>
            <person name="Taki K."/>
            <person name="Tammoja K."/>
            <person name="Tan S.L."/>
            <person name="Tang S."/>
            <person name="Taylor M.S."/>
            <person name="Tegner J."/>
            <person name="Teichmann S.A."/>
            <person name="Ueda H.R."/>
            <person name="van Nimwegen E."/>
            <person name="Verardo R."/>
            <person name="Wei C.L."/>
            <person name="Yagi K."/>
            <person name="Yamanishi H."/>
            <person name="Zabarovsky E."/>
            <person name="Zhu S."/>
            <person name="Zimmer A."/>
            <person name="Hide W."/>
            <person name="Bult C."/>
            <person name="Grimmond S.M."/>
            <person name="Teasdale R.D."/>
            <person name="Liu E.T."/>
            <person name="Brusic V."/>
            <person name="Quackenbush J."/>
            <person name="Wahlestedt C."/>
            <person name="Mattick J.S."/>
            <person name="Hume D.A."/>
            <person name="Kai C."/>
            <person name="Sasaki D."/>
            <person name="Tomaru Y."/>
            <person name="Fukuda S."/>
            <person name="Kanamori-Katayama M."/>
            <person name="Suzuki M."/>
            <person name="Aoki J."/>
            <person name="Arakawa T."/>
            <person name="Iida J."/>
            <person name="Imamura K."/>
            <person name="Itoh M."/>
            <person name="Kato T."/>
            <person name="Kawaji H."/>
            <person name="Kawagashira N."/>
            <person name="Kawashima T."/>
            <person name="Kojima M."/>
            <person name="Kondo S."/>
            <person name="Konno H."/>
            <person name="Nakano K."/>
            <person name="Ninomiya N."/>
            <person name="Nishio T."/>
            <person name="Okada M."/>
            <person name="Plessy C."/>
            <person name="Shibata K."/>
            <person name="Shiraki T."/>
            <person name="Suzuki S."/>
            <person name="Tagami M."/>
            <person name="Waki K."/>
            <person name="Watahiki A."/>
            <person name="Okamura-Oho Y."/>
            <person name="Suzuki H."/>
            <person name="Kawai J."/>
            <person name="Hayashizaki Y."/>
        </authorList>
    </citation>
    <scope>NUCLEOTIDE SEQUENCE [LARGE SCALE MRNA]</scope>
    <source>
        <strain>C57BL/6J</strain>
    </source>
</reference>
<reference key="4">
    <citation type="journal article" date="2010" name="Cell">
        <title>A tissue-specific atlas of mouse protein phosphorylation and expression.</title>
        <authorList>
            <person name="Huttlin E.L."/>
            <person name="Jedrychowski M.P."/>
            <person name="Elias J.E."/>
            <person name="Goswami T."/>
            <person name="Rad R."/>
            <person name="Beausoleil S.A."/>
            <person name="Villen J."/>
            <person name="Haas W."/>
            <person name="Sowa M.E."/>
            <person name="Gygi S.P."/>
        </authorList>
    </citation>
    <scope>IDENTIFICATION BY MASS SPECTROMETRY [LARGE SCALE ANALYSIS]</scope>
    <source>
        <tissue>Pancreas</tissue>
        <tissue>Spleen</tissue>
    </source>
</reference>
<reference key="5">
    <citation type="journal article" date="2013" name="Mol. Cell">
        <title>SIRT5-mediated lysine desuccinylation impacts diverse metabolic pathways.</title>
        <authorList>
            <person name="Park J."/>
            <person name="Chen Y."/>
            <person name="Tishkoff D.X."/>
            <person name="Peng C."/>
            <person name="Tan M."/>
            <person name="Dai L."/>
            <person name="Xie Z."/>
            <person name="Zhang Y."/>
            <person name="Zwaans B.M."/>
            <person name="Skinner M.E."/>
            <person name="Lombard D.B."/>
            <person name="Zhao Y."/>
        </authorList>
    </citation>
    <scope>ACETYLATION [LARGE SCALE ANALYSIS] AT LYS-63</scope>
    <scope>SUCCINYLATION [LARGE SCALE ANALYSIS] AT LYS-63</scope>
    <scope>IDENTIFICATION BY MASS SPECTROMETRY [LARGE SCALE ANALYSIS]</scope>
    <source>
        <tissue>Embryonic fibroblast</tissue>
    </source>
</reference>
<reference evidence="4 5" key="6">
    <citation type="journal article" date="2022" name="Nature">
        <title>A male germ-cell-specific ribosome controls male fertility.</title>
        <authorList>
            <person name="Li H."/>
            <person name="Huo Y."/>
            <person name="He X."/>
            <person name="Yao L."/>
            <person name="Zhang H."/>
            <person name="Cui Y."/>
            <person name="Xiao H."/>
            <person name="Xie W."/>
            <person name="Zhang D."/>
            <person name="Wang Y."/>
            <person name="Zhang S."/>
            <person name="Tu H."/>
            <person name="Cheng Y."/>
            <person name="Guo Y."/>
            <person name="Cao X."/>
            <person name="Zhu Y."/>
            <person name="Jiang T."/>
            <person name="Guo X."/>
            <person name="Qin Y."/>
            <person name="Sha J."/>
        </authorList>
    </citation>
    <scope>STRUCTURE BY ELECTRON MICROSCOPY (3.03 ANGSTROMS) OF RIBOSOME</scope>
    <scope>FUNCTION</scope>
    <scope>SUBUNIT</scope>
    <scope>SUBCELLULAR LOCATION</scope>
</reference>
<dbReference type="EMBL" id="Y16430">
    <property type="protein sequence ID" value="CAA76215.2"/>
    <property type="molecule type" value="mRNA"/>
</dbReference>
<dbReference type="EMBL" id="AK028214">
    <property type="protein sequence ID" value="BAC25818.1"/>
    <property type="molecule type" value="mRNA"/>
</dbReference>
<dbReference type="CCDS" id="CCDS28126.1"/>
<dbReference type="RefSeq" id="NP_001123956.1">
    <property type="nucleotide sequence ID" value="NM_001130484.1"/>
</dbReference>
<dbReference type="RefSeq" id="NP_001123957.1">
    <property type="nucleotide sequence ID" value="NM_001130485.1"/>
</dbReference>
<dbReference type="RefSeq" id="NP_067313.2">
    <property type="nucleotide sequence ID" value="NM_021338.3"/>
</dbReference>
<dbReference type="PDB" id="6SWA">
    <property type="method" value="EM"/>
    <property type="resolution" value="3.10 A"/>
    <property type="chains" value="d=1-110"/>
</dbReference>
<dbReference type="PDB" id="7CPU">
    <property type="method" value="EM"/>
    <property type="resolution" value="2.82 A"/>
    <property type="chains" value="Lf=1-110"/>
</dbReference>
<dbReference type="PDB" id="7CPV">
    <property type="method" value="EM"/>
    <property type="resolution" value="3.03 A"/>
    <property type="chains" value="Lf=1-110"/>
</dbReference>
<dbReference type="PDB" id="7LS1">
    <property type="method" value="EM"/>
    <property type="resolution" value="3.30 A"/>
    <property type="chains" value="Z2=1-110"/>
</dbReference>
<dbReference type="PDB" id="7LS2">
    <property type="method" value="EM"/>
    <property type="resolution" value="3.10 A"/>
    <property type="chains" value="Z2=1-110"/>
</dbReference>
<dbReference type="PDBsum" id="6SWA"/>
<dbReference type="PDBsum" id="7CPU"/>
<dbReference type="PDBsum" id="7CPV"/>
<dbReference type="PDBsum" id="7LS1"/>
<dbReference type="PDBsum" id="7LS2"/>
<dbReference type="EMDB" id="EMD-10321"/>
<dbReference type="EMDB" id="EMD-23500"/>
<dbReference type="EMDB" id="EMD-23501"/>
<dbReference type="EMDB" id="EMD-30432"/>
<dbReference type="EMDB" id="EMD-30433"/>
<dbReference type="SMR" id="O55142"/>
<dbReference type="BioGRID" id="208332">
    <property type="interactions" value="68"/>
</dbReference>
<dbReference type="ComplexPortal" id="CPX-5262">
    <property type="entry name" value="60S cytosolic large ribosomal subunit"/>
</dbReference>
<dbReference type="ComplexPortal" id="CPX-7662">
    <property type="entry name" value="60S cytosolic large ribosomal subunit, testis-specific variant"/>
</dbReference>
<dbReference type="ComplexPortal" id="CPX-7663">
    <property type="entry name" value="60S cytosolic large ribosomal subunit, striated muscle variant"/>
</dbReference>
<dbReference type="FunCoup" id="O55142">
    <property type="interactions" value="1419"/>
</dbReference>
<dbReference type="IntAct" id="O55142">
    <property type="interactions" value="1"/>
</dbReference>
<dbReference type="STRING" id="10090.ENSMUSP00000110728"/>
<dbReference type="GlyGen" id="O55142">
    <property type="glycosylation" value="2 sites, 1 O-linked glycan (1 site)"/>
</dbReference>
<dbReference type="iPTMnet" id="O55142"/>
<dbReference type="MetOSite" id="O55142"/>
<dbReference type="PhosphoSitePlus" id="O55142"/>
<dbReference type="SwissPalm" id="O55142"/>
<dbReference type="jPOST" id="O55142"/>
<dbReference type="PaxDb" id="10090-ENSMUSP00000110731"/>
<dbReference type="PeptideAtlas" id="O55142"/>
<dbReference type="ProteomicsDB" id="300487"/>
<dbReference type="Pumba" id="O55142"/>
<dbReference type="TopDownProteomics" id="O55142"/>
<dbReference type="Antibodypedia" id="33969">
    <property type="antibodies" value="62 antibodies from 16 providers"/>
</dbReference>
<dbReference type="DNASU" id="100505110"/>
<dbReference type="Ensembl" id="ENSMUST00000078804.12">
    <property type="protein sequence ID" value="ENSMUSP00000077857.6"/>
    <property type="gene ID" value="ENSMUSG00000060636.15"/>
</dbReference>
<dbReference type="Ensembl" id="ENSMUST00000115075.2">
    <property type="protein sequence ID" value="ENSMUSP00000110727.2"/>
    <property type="gene ID" value="ENSMUSG00000060636.15"/>
</dbReference>
<dbReference type="Ensembl" id="ENSMUST00000115076.8">
    <property type="protein sequence ID" value="ENSMUSP00000110728.2"/>
    <property type="gene ID" value="ENSMUSG00000060636.15"/>
</dbReference>
<dbReference type="Ensembl" id="ENSMUST00000115078.8">
    <property type="protein sequence ID" value="ENSMUSP00000110730.2"/>
    <property type="gene ID" value="ENSMUSG00000060636.15"/>
</dbReference>
<dbReference type="Ensembl" id="ENSMUST00000115079.8">
    <property type="protein sequence ID" value="ENSMUSP00000110731.2"/>
    <property type="gene ID" value="ENSMUSG00000060636.15"/>
</dbReference>
<dbReference type="GeneID" id="57808"/>
<dbReference type="KEGG" id="mmu:57808"/>
<dbReference type="UCSC" id="uc007yzu.2">
    <property type="organism name" value="mouse"/>
</dbReference>
<dbReference type="AGR" id="MGI:1928894"/>
<dbReference type="CTD" id="6165"/>
<dbReference type="MGI" id="MGI:1928894">
    <property type="gene designation" value="Rpl35a"/>
</dbReference>
<dbReference type="VEuPathDB" id="HostDB:ENSMUSG00000060636"/>
<dbReference type="eggNOG" id="KOG0887">
    <property type="taxonomic scope" value="Eukaryota"/>
</dbReference>
<dbReference type="GeneTree" id="ENSGT00390000016972"/>
<dbReference type="HOGENOM" id="CLU_100745_5_0_1"/>
<dbReference type="InParanoid" id="O55142"/>
<dbReference type="OMA" id="YRTNKHH"/>
<dbReference type="OrthoDB" id="1166329at2759"/>
<dbReference type="PhylomeDB" id="O55142"/>
<dbReference type="TreeFam" id="TF300104"/>
<dbReference type="Reactome" id="R-MMU-156827">
    <property type="pathway name" value="L13a-mediated translational silencing of Ceruloplasmin expression"/>
</dbReference>
<dbReference type="Reactome" id="R-MMU-1799339">
    <property type="pathway name" value="SRP-dependent cotranslational protein targeting to membrane"/>
</dbReference>
<dbReference type="Reactome" id="R-MMU-6791226">
    <property type="pathway name" value="Major pathway of rRNA processing in the nucleolus and cytosol"/>
</dbReference>
<dbReference type="Reactome" id="R-MMU-72689">
    <property type="pathway name" value="Formation of a pool of free 40S subunits"/>
</dbReference>
<dbReference type="Reactome" id="R-MMU-72706">
    <property type="pathway name" value="GTP hydrolysis and joining of the 60S ribosomal subunit"/>
</dbReference>
<dbReference type="Reactome" id="R-MMU-975956">
    <property type="pathway name" value="Nonsense Mediated Decay (NMD) independent of the Exon Junction Complex (EJC)"/>
</dbReference>
<dbReference type="Reactome" id="R-MMU-975957">
    <property type="pathway name" value="Nonsense Mediated Decay (NMD) enhanced by the Exon Junction Complex (EJC)"/>
</dbReference>
<dbReference type="BioGRID-ORCS" id="57808">
    <property type="hits" value="27 hits in 76 CRISPR screens"/>
</dbReference>
<dbReference type="CD-CODE" id="CE726F99">
    <property type="entry name" value="Postsynaptic density"/>
</dbReference>
<dbReference type="ChiTaRS" id="Rpl35a">
    <property type="organism name" value="mouse"/>
</dbReference>
<dbReference type="PRO" id="PR:O55142"/>
<dbReference type="Proteomes" id="UP000000589">
    <property type="component" value="Chromosome 16"/>
</dbReference>
<dbReference type="RNAct" id="O55142">
    <property type="molecule type" value="protein"/>
</dbReference>
<dbReference type="Bgee" id="ENSMUSG00000060636">
    <property type="expression patterns" value="Expressed in thymus and 81 other cell types or tissues"/>
</dbReference>
<dbReference type="ExpressionAtlas" id="O55142">
    <property type="expression patterns" value="baseline and differential"/>
</dbReference>
<dbReference type="GO" id="GO:0005737">
    <property type="term" value="C:cytoplasm"/>
    <property type="evidence" value="ECO:0000314"/>
    <property type="project" value="ComplexPortal"/>
</dbReference>
<dbReference type="GO" id="GO:0005829">
    <property type="term" value="C:cytosol"/>
    <property type="evidence" value="ECO:0000304"/>
    <property type="project" value="Reactome"/>
</dbReference>
<dbReference type="GO" id="GO:0022625">
    <property type="term" value="C:cytosolic large ribosomal subunit"/>
    <property type="evidence" value="ECO:0000314"/>
    <property type="project" value="UniProtKB"/>
</dbReference>
<dbReference type="GO" id="GO:0005739">
    <property type="term" value="C:mitochondrion"/>
    <property type="evidence" value="ECO:0007005"/>
    <property type="project" value="MGI"/>
</dbReference>
<dbReference type="GO" id="GO:0098794">
    <property type="term" value="C:postsynapse"/>
    <property type="evidence" value="ECO:0000303"/>
    <property type="project" value="SynGO"/>
</dbReference>
<dbReference type="GO" id="GO:0098793">
    <property type="term" value="C:presynapse"/>
    <property type="evidence" value="ECO:0000303"/>
    <property type="project" value="SynGO"/>
</dbReference>
<dbReference type="GO" id="GO:0005840">
    <property type="term" value="C:ribosome"/>
    <property type="evidence" value="ECO:0000303"/>
    <property type="project" value="SynGO"/>
</dbReference>
<dbReference type="GO" id="GO:0045202">
    <property type="term" value="C:synapse"/>
    <property type="evidence" value="ECO:0000314"/>
    <property type="project" value="SynGO"/>
</dbReference>
<dbReference type="GO" id="GO:0003735">
    <property type="term" value="F:structural constituent of ribosome"/>
    <property type="evidence" value="ECO:0000314"/>
    <property type="project" value="UniProtKB"/>
</dbReference>
<dbReference type="GO" id="GO:0002181">
    <property type="term" value="P:cytoplasmic translation"/>
    <property type="evidence" value="ECO:0000303"/>
    <property type="project" value="ComplexPortal"/>
</dbReference>
<dbReference type="GO" id="GO:0042273">
    <property type="term" value="P:ribosomal large subunit biogenesis"/>
    <property type="evidence" value="ECO:0007669"/>
    <property type="project" value="Ensembl"/>
</dbReference>
<dbReference type="GO" id="GO:0006364">
    <property type="term" value="P:rRNA processing"/>
    <property type="evidence" value="ECO:0007669"/>
    <property type="project" value="Ensembl"/>
</dbReference>
<dbReference type="GO" id="GO:0140242">
    <property type="term" value="P:translation at postsynapse"/>
    <property type="evidence" value="ECO:0000303"/>
    <property type="project" value="SynGO"/>
</dbReference>
<dbReference type="GO" id="GO:0140236">
    <property type="term" value="P:translation at presynapse"/>
    <property type="evidence" value="ECO:0000303"/>
    <property type="project" value="SynGO"/>
</dbReference>
<dbReference type="FunFam" id="2.40.10.190:FF:000005">
    <property type="entry name" value="60S ribosomal protein L35a"/>
    <property type="match status" value="1"/>
</dbReference>
<dbReference type="Gene3D" id="2.40.10.190">
    <property type="entry name" value="translation elongation factor selb, chain A, domain 4"/>
    <property type="match status" value="1"/>
</dbReference>
<dbReference type="HAMAP" id="MF_00573">
    <property type="entry name" value="Ribosomal_eL33"/>
    <property type="match status" value="1"/>
</dbReference>
<dbReference type="InterPro" id="IPR001780">
    <property type="entry name" value="Ribosomal_eL33"/>
</dbReference>
<dbReference type="InterPro" id="IPR018266">
    <property type="entry name" value="Ribosomal_eL33_CS"/>
</dbReference>
<dbReference type="InterPro" id="IPR038661">
    <property type="entry name" value="Ribosomal_eL33_sf"/>
</dbReference>
<dbReference type="InterPro" id="IPR009000">
    <property type="entry name" value="Transl_B-barrel_sf"/>
</dbReference>
<dbReference type="PANTHER" id="PTHR10902">
    <property type="entry name" value="60S RIBOSOMAL PROTEIN L35A"/>
    <property type="match status" value="1"/>
</dbReference>
<dbReference type="Pfam" id="PF01247">
    <property type="entry name" value="Ribosomal_L35Ae"/>
    <property type="match status" value="1"/>
</dbReference>
<dbReference type="SUPFAM" id="SSF50447">
    <property type="entry name" value="Translation proteins"/>
    <property type="match status" value="1"/>
</dbReference>
<dbReference type="PROSITE" id="PS01105">
    <property type="entry name" value="RIBOSOMAL_L35AE"/>
    <property type="match status" value="1"/>
</dbReference>
<gene>
    <name type="primary">Rpl35a</name>
</gene>
<protein>
    <recommendedName>
        <fullName evidence="3">Large ribosomal subunit protein eL33</fullName>
    </recommendedName>
    <alternativeName>
        <fullName>60S ribosomal protein L35a</fullName>
    </alternativeName>
</protein>
<accession>O55142</accession>
<proteinExistence type="evidence at protein level"/>
<organism>
    <name type="scientific">Mus musculus</name>
    <name type="common">Mouse</name>
    <dbReference type="NCBI Taxonomy" id="10090"/>
    <lineage>
        <taxon>Eukaryota</taxon>
        <taxon>Metazoa</taxon>
        <taxon>Chordata</taxon>
        <taxon>Craniata</taxon>
        <taxon>Vertebrata</taxon>
        <taxon>Euteleostomi</taxon>
        <taxon>Mammalia</taxon>
        <taxon>Eutheria</taxon>
        <taxon>Euarchontoglires</taxon>
        <taxon>Glires</taxon>
        <taxon>Rodentia</taxon>
        <taxon>Myomorpha</taxon>
        <taxon>Muroidea</taxon>
        <taxon>Muridae</taxon>
        <taxon>Murinae</taxon>
        <taxon>Mus</taxon>
        <taxon>Mus</taxon>
    </lineage>
</organism>
<feature type="chain" id="PRO_0000192798" description="Large ribosomal subunit protein eL33">
    <location>
        <begin position="1"/>
        <end position="110"/>
    </location>
</feature>
<feature type="modified residue" description="N6-acetyllysine" evidence="1">
    <location>
        <position position="8"/>
    </location>
</feature>
<feature type="modified residue" description="N6-acetyllysine; alternate" evidence="6">
    <location>
        <position position="63"/>
    </location>
</feature>
<feature type="modified residue" description="N6-succinyllysine; alternate" evidence="6">
    <location>
        <position position="63"/>
    </location>
</feature>
<keyword id="KW-0002">3D-structure</keyword>
<keyword id="KW-0007">Acetylation</keyword>
<keyword id="KW-0963">Cytoplasm</keyword>
<keyword id="KW-1185">Reference proteome</keyword>
<keyword id="KW-0687">Ribonucleoprotein</keyword>
<keyword id="KW-0689">Ribosomal protein</keyword>
<comment type="function">
    <text evidence="1 2">Component of the large ribosomal subunit (PubMed:36517592). The ribosome is a large ribonucleoprotein complex responsible for the synthesis of proteins in the cell (PubMed:36517592). Required for the proliferation and viability of hematopoietic cells (By similarity).</text>
</comment>
<comment type="subunit">
    <text evidence="2">Component of the large ribosomal subunit.</text>
</comment>
<comment type="subcellular location">
    <subcellularLocation>
        <location evidence="2">Cytoplasm</location>
    </subcellularLocation>
</comment>
<comment type="similarity">
    <text evidence="3">Belongs to the eukaryotic ribosomal protein eL33 family.</text>
</comment>
<sequence length="110" mass="12554">MSGRLWCKAIFAGYKRGLRNQREHTALLKIEGVYARDETEFYLGKRCAYVYKAKNNTVTPGGKPNKTRVIWGKVTRAHGNSGMVRAKFRSNLPAKAIGHRIRVMLYPSRI</sequence>
<name>RL35A_MOUSE</name>
<evidence type="ECO:0000250" key="1">
    <source>
        <dbReference type="UniProtKB" id="P18077"/>
    </source>
</evidence>
<evidence type="ECO:0000269" key="2">
    <source>
    </source>
</evidence>
<evidence type="ECO:0000305" key="3"/>
<evidence type="ECO:0007744" key="4">
    <source>
        <dbReference type="PDB" id="7CPU"/>
    </source>
</evidence>
<evidence type="ECO:0007744" key="5">
    <source>
        <dbReference type="PDB" id="7CPV"/>
    </source>
</evidence>
<evidence type="ECO:0007744" key="6">
    <source>
    </source>
</evidence>